<comment type="function">
    <text evidence="1">Involved in the biosynthesis of volatile esters which confer ripe apple fruit flavor (By similarity). Alcohol acyl transferase that can use a wide range of alcohols as substrate to produce esters (By similarity).</text>
</comment>
<comment type="tissue specificity">
    <text evidence="3">Expressed at very low levels in the skin of ripe fruit.</text>
</comment>
<comment type="developmental stage">
    <text evidence="3">Accumulates progressively at very low levels during fruit development, and fades out in ripe fruit.</text>
</comment>
<comment type="miscellaneous">
    <text evidence="6">The fruit of cv. Royal Gala exhibits a high ester accumulation, whereas the cv. Granny Smith contains low ester levels; this influences strongly the ripe apple fruit aroma.</text>
</comment>
<comment type="similarity">
    <text evidence="5">Belongs to the plant acyltransferase family.</text>
</comment>
<comment type="sequence caution" evidence="5">
    <conflict type="erroneous gene model prediction">
        <sequence resource="EMBL-CDS" id="AGW30204"/>
    </conflict>
</comment>
<organism>
    <name type="scientific">Malus domestica</name>
    <name type="common">Apple</name>
    <name type="synonym">Pyrus malus</name>
    <dbReference type="NCBI Taxonomy" id="3750"/>
    <lineage>
        <taxon>Eukaryota</taxon>
        <taxon>Viridiplantae</taxon>
        <taxon>Streptophyta</taxon>
        <taxon>Embryophyta</taxon>
        <taxon>Tracheophyta</taxon>
        <taxon>Spermatophyta</taxon>
        <taxon>Magnoliopsida</taxon>
        <taxon>eudicotyledons</taxon>
        <taxon>Gunneridae</taxon>
        <taxon>Pentapetalae</taxon>
        <taxon>rosids</taxon>
        <taxon>fabids</taxon>
        <taxon>Rosales</taxon>
        <taxon>Rosaceae</taxon>
        <taxon>Amygdaloideae</taxon>
        <taxon>Maleae</taxon>
        <taxon>Malus</taxon>
    </lineage>
</organism>
<reference key="1">
    <citation type="journal article" date="2014" name="Plant J.">
        <title>The AAT1 locus is critical for the biosynthesis of esters contributing to 'ripe apple' flavour in 'Royal Gala' and 'Granny Smith' apples.</title>
        <authorList>
            <person name="Souleyre E.J.F."/>
            <person name="Chagne D."/>
            <person name="Chen X."/>
            <person name="Tomes S."/>
            <person name="Turner R.M."/>
            <person name="Wang M.Y."/>
            <person name="Maddumage R."/>
            <person name="Hunt M.B."/>
            <person name="Winz R.A."/>
            <person name="Wiedow C."/>
            <person name="Hamiaux C."/>
            <person name="Gardiner S.E."/>
            <person name="Rowan D.D."/>
            <person name="Atkinson R.G."/>
        </authorList>
    </citation>
    <scope>NUCLEOTIDE SEQUENCE [GENOMIC DNA] OF 1-301</scope>
    <scope>TISSUE SPECIFICITY</scope>
    <scope>DEVELOPMENTAL STAGE</scope>
    <scope>GENE FAMILY</scope>
    <scope>NOMENCLATURE</scope>
    <source>
        <strain>cv. Granny Smith</strain>
    </source>
</reference>
<gene>
    <name evidence="4" type="primary">AAT1GSB</name>
</gene>
<proteinExistence type="evidence at transcript level"/>
<feature type="chain" id="PRO_0000451712" description="Alcohol acyl transferase 1 allele GSb">
    <location>
        <begin position="1"/>
        <end position="455"/>
    </location>
</feature>
<feature type="active site" description="Proton acceptor" evidence="2">
    <location>
        <position position="164"/>
    </location>
</feature>
<feature type="active site" description="Proton acceptor" evidence="2">
    <location>
        <position position="385"/>
    </location>
</feature>
<name>ATGSB_MALDO</name>
<protein>
    <recommendedName>
        <fullName evidence="4">Alcohol acyl transferase 1 allele GSb</fullName>
        <shortName evidence="4">AAT1-GSb</shortName>
        <ecNumber evidence="1">2.3.1.-</ecNumber>
    </recommendedName>
</protein>
<sequence>MMSFSVLQVKRLQLELITPAKPTLQETKFLSDIDDQEGLRFQVPVIMCYKDNPSLNKNCNPVKVIREALSRALVYYYPLAGRLKEGPNRKLMVDCNGEGILFVEASADVTLEQLGDKILPPCPLLEEFLFNFPGSDGIIGCPLLLVQVTCLTCGGFILALRVNHTMCDAPGLLLFLTAIAEMARGAHAPSILPVWERELLFSRDPPRITCVHHEYEDVIDHSDGSYASSNQSNMVQRSFYFGAKEMRVLRKQIPPHVISTCSTFDLITACLSKCRTLALKINPKQAVRVSCVVNARGKHHNVRLPLGYYGNAFACPAAFSKAEPLCKNPLGYALELVKKAKATMNEEYLRSVADLLVLRGRPQYSSTGSYLIVSDNTRAGFGDVNFGWGQPVFAGPAKALDLISFYVQHNNNTEDGILVPMCLPSSAMERFQQELESITPEPKEDICNNLRSTSQ</sequence>
<accession>V9P9S4</accession>
<evidence type="ECO:0000250" key="1">
    <source>
        <dbReference type="UniProtKB" id="Q64FJ6"/>
    </source>
</evidence>
<evidence type="ECO:0000250" key="2">
    <source>
        <dbReference type="UniProtKB" id="Q9FI78"/>
    </source>
</evidence>
<evidence type="ECO:0000269" key="3">
    <source>
    </source>
</evidence>
<evidence type="ECO:0000303" key="4">
    <source>
    </source>
</evidence>
<evidence type="ECO:0000305" key="5"/>
<evidence type="ECO:0000305" key="6">
    <source>
    </source>
</evidence>
<dbReference type="EC" id="2.3.1.-" evidence="1"/>
<dbReference type="EMBL" id="KC291133">
    <property type="protein sequence ID" value="AGW30204.1"/>
    <property type="status" value="ALT_SEQ"/>
    <property type="molecule type" value="Genomic_DNA"/>
</dbReference>
<dbReference type="SMR" id="V9P9S4"/>
<dbReference type="GO" id="GO:0016746">
    <property type="term" value="F:acyltransferase activity"/>
    <property type="evidence" value="ECO:0000250"/>
    <property type="project" value="UniProtKB"/>
</dbReference>
<dbReference type="GO" id="GO:0006066">
    <property type="term" value="P:alcohol metabolic process"/>
    <property type="evidence" value="ECO:0000250"/>
    <property type="project" value="UniProtKB"/>
</dbReference>
<dbReference type="GO" id="GO:0009836">
    <property type="term" value="P:fruit ripening, climacteric"/>
    <property type="evidence" value="ECO:0000270"/>
    <property type="project" value="UniProtKB"/>
</dbReference>
<dbReference type="Gene3D" id="3.30.559.10">
    <property type="entry name" value="Chloramphenicol acetyltransferase-like domain"/>
    <property type="match status" value="2"/>
</dbReference>
<dbReference type="InterPro" id="IPR023213">
    <property type="entry name" value="CAT-like_dom_sf"/>
</dbReference>
<dbReference type="InterPro" id="IPR050898">
    <property type="entry name" value="Plant_acyltransferase"/>
</dbReference>
<dbReference type="PANTHER" id="PTHR31147">
    <property type="entry name" value="ACYL TRANSFERASE 4"/>
    <property type="match status" value="1"/>
</dbReference>
<dbReference type="PANTHER" id="PTHR31147:SF66">
    <property type="entry name" value="OS05G0315700 PROTEIN"/>
    <property type="match status" value="1"/>
</dbReference>
<dbReference type="Pfam" id="PF02458">
    <property type="entry name" value="Transferase"/>
    <property type="match status" value="1"/>
</dbReference>
<keyword id="KW-0808">Transferase</keyword>